<gene>
    <name evidence="1" type="primary">gltX</name>
    <name type="ordered locus">stu1814</name>
</gene>
<reference key="1">
    <citation type="journal article" date="2004" name="Nat. Biotechnol.">
        <title>Complete sequence and comparative genome analysis of the dairy bacterium Streptococcus thermophilus.</title>
        <authorList>
            <person name="Bolotin A."/>
            <person name="Quinquis B."/>
            <person name="Renault P."/>
            <person name="Sorokin A."/>
            <person name="Ehrlich S.D."/>
            <person name="Kulakauskas S."/>
            <person name="Lapidus A."/>
            <person name="Goltsman E."/>
            <person name="Mazur M."/>
            <person name="Pusch G.D."/>
            <person name="Fonstein M."/>
            <person name="Overbeek R."/>
            <person name="Kyprides N."/>
            <person name="Purnelle B."/>
            <person name="Prozzi D."/>
            <person name="Ngui K."/>
            <person name="Masuy D."/>
            <person name="Hancy F."/>
            <person name="Burteau S."/>
            <person name="Boutry M."/>
            <person name="Delcour J."/>
            <person name="Goffeau A."/>
            <person name="Hols P."/>
        </authorList>
    </citation>
    <scope>NUCLEOTIDE SEQUENCE [LARGE SCALE GENOMIC DNA]</scope>
    <source>
        <strain>ATCC BAA-250 / LMG 18311</strain>
    </source>
</reference>
<evidence type="ECO:0000255" key="1">
    <source>
        <dbReference type="HAMAP-Rule" id="MF_00022"/>
    </source>
</evidence>
<feature type="chain" id="PRO_0000119672" description="Glutamate--tRNA ligase">
    <location>
        <begin position="1"/>
        <end position="484"/>
    </location>
</feature>
<feature type="short sequence motif" description="'HIGH' region" evidence="1">
    <location>
        <begin position="11"/>
        <end position="21"/>
    </location>
</feature>
<feature type="short sequence motif" description="'KMSKS' region" evidence="1">
    <location>
        <begin position="255"/>
        <end position="259"/>
    </location>
</feature>
<feature type="binding site" evidence="1">
    <location>
        <position position="258"/>
    </location>
    <ligand>
        <name>ATP</name>
        <dbReference type="ChEBI" id="CHEBI:30616"/>
    </ligand>
</feature>
<organism>
    <name type="scientific">Streptococcus thermophilus (strain ATCC BAA-250 / LMG 18311)</name>
    <dbReference type="NCBI Taxonomy" id="264199"/>
    <lineage>
        <taxon>Bacteria</taxon>
        <taxon>Bacillati</taxon>
        <taxon>Bacillota</taxon>
        <taxon>Bacilli</taxon>
        <taxon>Lactobacillales</taxon>
        <taxon>Streptococcaceae</taxon>
        <taxon>Streptococcus</taxon>
    </lineage>
</organism>
<name>SYE_STRT2</name>
<keyword id="KW-0030">Aminoacyl-tRNA synthetase</keyword>
<keyword id="KW-0067">ATP-binding</keyword>
<keyword id="KW-0963">Cytoplasm</keyword>
<keyword id="KW-0436">Ligase</keyword>
<keyword id="KW-0547">Nucleotide-binding</keyword>
<keyword id="KW-0648">Protein biosynthesis</keyword>
<keyword id="KW-1185">Reference proteome</keyword>
<accession>Q5M2K1</accession>
<sequence>MAKDIRVRYAPSPTGLLHIGNARTALFNYLYARHHGGTFIIRIEDTDRKRHVEDGERSQLDNLRWLGIDWDESPETHENYRQSERLPLYQKYIDQLLAEGKAYKSYVTEEELAAERERQEAAGETPRYINEFLGMTEEEKAAYIAEREAAGIIPTVRLAVNESGIYKWHDIVKGDIEFEGGNIGGDWVIQKRDGYPTYNFAVVVDDHDMQISHVIRGDDHIANTPKQLMVYEALGWEAPEFGHMTLITNSETGKKLSKRDTNTLQFIEDYRKKGYLPEAVFNFIALLGWNPGGEDEIFSREELIKLFDENRLSKSPAAFDQKKLDWMSNDYIKHADFDKVFALCKPFLEEAGRLTDKAEKLVELYKPQMTAAEEIVPLTDLFFEDFPELTAAEKEVMAGETVPTVLEAFKAKLEAMSDDEFVTENIFSQIKAVQKETGIKGKNLFMPIRIAVSGEMHGPELPETIFLLGREKSIKHIDQVLATL</sequence>
<protein>
    <recommendedName>
        <fullName evidence="1">Glutamate--tRNA ligase</fullName>
        <ecNumber evidence="1">6.1.1.17</ecNumber>
    </recommendedName>
    <alternativeName>
        <fullName evidence="1">Glutamyl-tRNA synthetase</fullName>
        <shortName evidence="1">GluRS</shortName>
    </alternativeName>
</protein>
<proteinExistence type="inferred from homology"/>
<dbReference type="EC" id="6.1.1.17" evidence="1"/>
<dbReference type="EMBL" id="CP000023">
    <property type="protein sequence ID" value="AAV61413.1"/>
    <property type="molecule type" value="Genomic_DNA"/>
</dbReference>
<dbReference type="RefSeq" id="WP_002953532.1">
    <property type="nucleotide sequence ID" value="NC_006448.1"/>
</dbReference>
<dbReference type="SMR" id="Q5M2K1"/>
<dbReference type="STRING" id="264199.stu1814"/>
<dbReference type="GeneID" id="66899551"/>
<dbReference type="KEGG" id="stl:stu1814"/>
<dbReference type="eggNOG" id="COG0008">
    <property type="taxonomic scope" value="Bacteria"/>
</dbReference>
<dbReference type="HOGENOM" id="CLU_015768_6_1_9"/>
<dbReference type="Proteomes" id="UP000001170">
    <property type="component" value="Chromosome"/>
</dbReference>
<dbReference type="GO" id="GO:0005829">
    <property type="term" value="C:cytosol"/>
    <property type="evidence" value="ECO:0007669"/>
    <property type="project" value="TreeGrafter"/>
</dbReference>
<dbReference type="GO" id="GO:0005524">
    <property type="term" value="F:ATP binding"/>
    <property type="evidence" value="ECO:0007669"/>
    <property type="project" value="UniProtKB-UniRule"/>
</dbReference>
<dbReference type="GO" id="GO:0004818">
    <property type="term" value="F:glutamate-tRNA ligase activity"/>
    <property type="evidence" value="ECO:0007669"/>
    <property type="project" value="UniProtKB-UniRule"/>
</dbReference>
<dbReference type="GO" id="GO:0000049">
    <property type="term" value="F:tRNA binding"/>
    <property type="evidence" value="ECO:0007669"/>
    <property type="project" value="InterPro"/>
</dbReference>
<dbReference type="GO" id="GO:0008270">
    <property type="term" value="F:zinc ion binding"/>
    <property type="evidence" value="ECO:0007669"/>
    <property type="project" value="InterPro"/>
</dbReference>
<dbReference type="GO" id="GO:0006424">
    <property type="term" value="P:glutamyl-tRNA aminoacylation"/>
    <property type="evidence" value="ECO:0007669"/>
    <property type="project" value="UniProtKB-UniRule"/>
</dbReference>
<dbReference type="CDD" id="cd00808">
    <property type="entry name" value="GluRS_core"/>
    <property type="match status" value="1"/>
</dbReference>
<dbReference type="FunFam" id="1.10.10.350:FF:000002">
    <property type="entry name" value="Glutamate--tRNA ligase"/>
    <property type="match status" value="1"/>
</dbReference>
<dbReference type="FunFam" id="3.40.50.620:FF:000007">
    <property type="entry name" value="Glutamate--tRNA ligase"/>
    <property type="match status" value="1"/>
</dbReference>
<dbReference type="Gene3D" id="1.10.10.350">
    <property type="match status" value="1"/>
</dbReference>
<dbReference type="Gene3D" id="3.40.50.620">
    <property type="entry name" value="HUPs"/>
    <property type="match status" value="1"/>
</dbReference>
<dbReference type="HAMAP" id="MF_00022">
    <property type="entry name" value="Glu_tRNA_synth_type1"/>
    <property type="match status" value="1"/>
</dbReference>
<dbReference type="InterPro" id="IPR045462">
    <property type="entry name" value="aa-tRNA-synth_I_cd-bd"/>
</dbReference>
<dbReference type="InterPro" id="IPR020751">
    <property type="entry name" value="aa-tRNA-synth_I_codon-bd_sub2"/>
</dbReference>
<dbReference type="InterPro" id="IPR001412">
    <property type="entry name" value="aa-tRNA-synth_I_CS"/>
</dbReference>
<dbReference type="InterPro" id="IPR008925">
    <property type="entry name" value="aa_tRNA-synth_I_cd-bd_sf"/>
</dbReference>
<dbReference type="InterPro" id="IPR004527">
    <property type="entry name" value="Glu-tRNA-ligase_bac/mito"/>
</dbReference>
<dbReference type="InterPro" id="IPR000924">
    <property type="entry name" value="Glu/Gln-tRNA-synth"/>
</dbReference>
<dbReference type="InterPro" id="IPR020058">
    <property type="entry name" value="Glu/Gln-tRNA-synth_Ib_cat-dom"/>
</dbReference>
<dbReference type="InterPro" id="IPR049940">
    <property type="entry name" value="GluQ/Sye"/>
</dbReference>
<dbReference type="InterPro" id="IPR033910">
    <property type="entry name" value="GluRS_core"/>
</dbReference>
<dbReference type="InterPro" id="IPR014729">
    <property type="entry name" value="Rossmann-like_a/b/a_fold"/>
</dbReference>
<dbReference type="NCBIfam" id="TIGR00464">
    <property type="entry name" value="gltX_bact"/>
    <property type="match status" value="1"/>
</dbReference>
<dbReference type="PANTHER" id="PTHR43311">
    <property type="entry name" value="GLUTAMATE--TRNA LIGASE"/>
    <property type="match status" value="1"/>
</dbReference>
<dbReference type="PANTHER" id="PTHR43311:SF2">
    <property type="entry name" value="GLUTAMATE--TRNA LIGASE, MITOCHONDRIAL-RELATED"/>
    <property type="match status" value="1"/>
</dbReference>
<dbReference type="Pfam" id="PF19269">
    <property type="entry name" value="Anticodon_2"/>
    <property type="match status" value="1"/>
</dbReference>
<dbReference type="Pfam" id="PF00749">
    <property type="entry name" value="tRNA-synt_1c"/>
    <property type="match status" value="1"/>
</dbReference>
<dbReference type="PRINTS" id="PR00987">
    <property type="entry name" value="TRNASYNTHGLU"/>
</dbReference>
<dbReference type="SUPFAM" id="SSF48163">
    <property type="entry name" value="An anticodon-binding domain of class I aminoacyl-tRNA synthetases"/>
    <property type="match status" value="1"/>
</dbReference>
<dbReference type="SUPFAM" id="SSF52374">
    <property type="entry name" value="Nucleotidylyl transferase"/>
    <property type="match status" value="1"/>
</dbReference>
<dbReference type="PROSITE" id="PS00178">
    <property type="entry name" value="AA_TRNA_LIGASE_I"/>
    <property type="match status" value="1"/>
</dbReference>
<comment type="function">
    <text evidence="1">Catalyzes the attachment of glutamate to tRNA(Glu) in a two-step reaction: glutamate is first activated by ATP to form Glu-AMP and then transferred to the acceptor end of tRNA(Glu).</text>
</comment>
<comment type="catalytic activity">
    <reaction evidence="1">
        <text>tRNA(Glu) + L-glutamate + ATP = L-glutamyl-tRNA(Glu) + AMP + diphosphate</text>
        <dbReference type="Rhea" id="RHEA:23540"/>
        <dbReference type="Rhea" id="RHEA-COMP:9663"/>
        <dbReference type="Rhea" id="RHEA-COMP:9680"/>
        <dbReference type="ChEBI" id="CHEBI:29985"/>
        <dbReference type="ChEBI" id="CHEBI:30616"/>
        <dbReference type="ChEBI" id="CHEBI:33019"/>
        <dbReference type="ChEBI" id="CHEBI:78442"/>
        <dbReference type="ChEBI" id="CHEBI:78520"/>
        <dbReference type="ChEBI" id="CHEBI:456215"/>
        <dbReference type="EC" id="6.1.1.17"/>
    </reaction>
</comment>
<comment type="subunit">
    <text evidence="1">Monomer.</text>
</comment>
<comment type="subcellular location">
    <subcellularLocation>
        <location evidence="1">Cytoplasm</location>
    </subcellularLocation>
</comment>
<comment type="similarity">
    <text evidence="1">Belongs to the class-I aminoacyl-tRNA synthetase family. Glutamate--tRNA ligase type 1 subfamily.</text>
</comment>